<gene>
    <name evidence="1" type="primary">rpsS</name>
    <name type="ordered locus">stu1930</name>
</gene>
<keyword id="KW-1185">Reference proteome</keyword>
<keyword id="KW-0687">Ribonucleoprotein</keyword>
<keyword id="KW-0689">Ribosomal protein</keyword>
<keyword id="KW-0694">RNA-binding</keyword>
<keyword id="KW-0699">rRNA-binding</keyword>
<sequence>MGRSLKKGPFVDEHLMKKVEAQANDEKKKVIKTWSRRSTIFPSFIGYTIAVYDGRKHVPVYIQEDMVGHKLGEFAPTRTYKGHAADDKKTRR</sequence>
<organism>
    <name type="scientific">Streptococcus thermophilus (strain ATCC BAA-250 / LMG 18311)</name>
    <dbReference type="NCBI Taxonomy" id="264199"/>
    <lineage>
        <taxon>Bacteria</taxon>
        <taxon>Bacillati</taxon>
        <taxon>Bacillota</taxon>
        <taxon>Bacilli</taxon>
        <taxon>Lactobacillales</taxon>
        <taxon>Streptococcaceae</taxon>
        <taxon>Streptococcus</taxon>
    </lineage>
</organism>
<protein>
    <recommendedName>
        <fullName evidence="1">Small ribosomal subunit protein uS19</fullName>
    </recommendedName>
    <alternativeName>
        <fullName evidence="2">30S ribosomal protein S19</fullName>
    </alternativeName>
</protein>
<proteinExistence type="inferred from homology"/>
<reference key="1">
    <citation type="journal article" date="2004" name="Nat. Biotechnol.">
        <title>Complete sequence and comparative genome analysis of the dairy bacterium Streptococcus thermophilus.</title>
        <authorList>
            <person name="Bolotin A."/>
            <person name="Quinquis B."/>
            <person name="Renault P."/>
            <person name="Sorokin A."/>
            <person name="Ehrlich S.D."/>
            <person name="Kulakauskas S."/>
            <person name="Lapidus A."/>
            <person name="Goltsman E."/>
            <person name="Mazur M."/>
            <person name="Pusch G.D."/>
            <person name="Fonstein M."/>
            <person name="Overbeek R."/>
            <person name="Kyprides N."/>
            <person name="Purnelle B."/>
            <person name="Prozzi D."/>
            <person name="Ngui K."/>
            <person name="Masuy D."/>
            <person name="Hancy F."/>
            <person name="Burteau S."/>
            <person name="Boutry M."/>
            <person name="Delcour J."/>
            <person name="Goffeau A."/>
            <person name="Hols P."/>
        </authorList>
    </citation>
    <scope>NUCLEOTIDE SEQUENCE [LARGE SCALE GENOMIC DNA]</scope>
    <source>
        <strain>ATCC BAA-250 / LMG 18311</strain>
    </source>
</reference>
<evidence type="ECO:0000255" key="1">
    <source>
        <dbReference type="HAMAP-Rule" id="MF_00531"/>
    </source>
</evidence>
<evidence type="ECO:0000305" key="2"/>
<name>RS19_STRT2</name>
<comment type="function">
    <text evidence="1">Protein S19 forms a complex with S13 that binds strongly to the 16S ribosomal RNA.</text>
</comment>
<comment type="similarity">
    <text evidence="1">Belongs to the universal ribosomal protein uS19 family.</text>
</comment>
<dbReference type="EMBL" id="CP000023">
    <property type="protein sequence ID" value="AAV61528.1"/>
    <property type="molecule type" value="Genomic_DNA"/>
</dbReference>
<dbReference type="RefSeq" id="WP_000533765.1">
    <property type="nucleotide sequence ID" value="NC_006448.1"/>
</dbReference>
<dbReference type="SMR" id="Q5M2B7"/>
<dbReference type="STRING" id="264199.stu1930"/>
<dbReference type="GeneID" id="98392396"/>
<dbReference type="KEGG" id="stl:stu1930"/>
<dbReference type="eggNOG" id="COG0185">
    <property type="taxonomic scope" value="Bacteria"/>
</dbReference>
<dbReference type="HOGENOM" id="CLU_144911_0_1_9"/>
<dbReference type="Proteomes" id="UP000001170">
    <property type="component" value="Chromosome"/>
</dbReference>
<dbReference type="GO" id="GO:0005737">
    <property type="term" value="C:cytoplasm"/>
    <property type="evidence" value="ECO:0007669"/>
    <property type="project" value="UniProtKB-ARBA"/>
</dbReference>
<dbReference type="GO" id="GO:0015935">
    <property type="term" value="C:small ribosomal subunit"/>
    <property type="evidence" value="ECO:0007669"/>
    <property type="project" value="InterPro"/>
</dbReference>
<dbReference type="GO" id="GO:0019843">
    <property type="term" value="F:rRNA binding"/>
    <property type="evidence" value="ECO:0007669"/>
    <property type="project" value="UniProtKB-UniRule"/>
</dbReference>
<dbReference type="GO" id="GO:0003735">
    <property type="term" value="F:structural constituent of ribosome"/>
    <property type="evidence" value="ECO:0007669"/>
    <property type="project" value="InterPro"/>
</dbReference>
<dbReference type="GO" id="GO:0000028">
    <property type="term" value="P:ribosomal small subunit assembly"/>
    <property type="evidence" value="ECO:0007669"/>
    <property type="project" value="TreeGrafter"/>
</dbReference>
<dbReference type="GO" id="GO:0006412">
    <property type="term" value="P:translation"/>
    <property type="evidence" value="ECO:0007669"/>
    <property type="project" value="UniProtKB-UniRule"/>
</dbReference>
<dbReference type="FunFam" id="3.30.860.10:FF:000001">
    <property type="entry name" value="30S ribosomal protein S19"/>
    <property type="match status" value="1"/>
</dbReference>
<dbReference type="Gene3D" id="3.30.860.10">
    <property type="entry name" value="30s Ribosomal Protein S19, Chain A"/>
    <property type="match status" value="1"/>
</dbReference>
<dbReference type="HAMAP" id="MF_00531">
    <property type="entry name" value="Ribosomal_uS19"/>
    <property type="match status" value="1"/>
</dbReference>
<dbReference type="InterPro" id="IPR002222">
    <property type="entry name" value="Ribosomal_uS19"/>
</dbReference>
<dbReference type="InterPro" id="IPR005732">
    <property type="entry name" value="Ribosomal_uS19_bac-type"/>
</dbReference>
<dbReference type="InterPro" id="IPR020934">
    <property type="entry name" value="Ribosomal_uS19_CS"/>
</dbReference>
<dbReference type="InterPro" id="IPR023575">
    <property type="entry name" value="Ribosomal_uS19_SF"/>
</dbReference>
<dbReference type="NCBIfam" id="TIGR01050">
    <property type="entry name" value="rpsS_bact"/>
    <property type="match status" value="1"/>
</dbReference>
<dbReference type="PANTHER" id="PTHR11880">
    <property type="entry name" value="RIBOSOMAL PROTEIN S19P FAMILY MEMBER"/>
    <property type="match status" value="1"/>
</dbReference>
<dbReference type="PANTHER" id="PTHR11880:SF8">
    <property type="entry name" value="SMALL RIBOSOMAL SUBUNIT PROTEIN US19M"/>
    <property type="match status" value="1"/>
</dbReference>
<dbReference type="Pfam" id="PF00203">
    <property type="entry name" value="Ribosomal_S19"/>
    <property type="match status" value="1"/>
</dbReference>
<dbReference type="PIRSF" id="PIRSF002144">
    <property type="entry name" value="Ribosomal_S19"/>
    <property type="match status" value="1"/>
</dbReference>
<dbReference type="PRINTS" id="PR00975">
    <property type="entry name" value="RIBOSOMALS19"/>
</dbReference>
<dbReference type="SUPFAM" id="SSF54570">
    <property type="entry name" value="Ribosomal protein S19"/>
    <property type="match status" value="1"/>
</dbReference>
<dbReference type="PROSITE" id="PS00323">
    <property type="entry name" value="RIBOSOMAL_S19"/>
    <property type="match status" value="1"/>
</dbReference>
<accession>Q5M2B7</accession>
<feature type="chain" id="PRO_0000265447" description="Small ribosomal subunit protein uS19">
    <location>
        <begin position="1"/>
        <end position="92"/>
    </location>
</feature>